<evidence type="ECO:0000255" key="1">
    <source>
        <dbReference type="HAMAP-Rule" id="MF_01302"/>
    </source>
</evidence>
<evidence type="ECO:0000305" key="2"/>
<sequence length="130" mass="14127">MSMQDPIADMLTRIRNGQAANKAAVTMPSSKLKVAIANVLKEEGFIEDFKVEGDTKPELELTLKYFQGKAVVESIQRVSRPGLRIYKRKDELPKVMAGLGIAVVSTSKGVMTDRAARQAGLGGEIICYVA</sequence>
<organism>
    <name type="scientific">Citrobacter koseri (strain ATCC BAA-895 / CDC 4225-83 / SGSC4696)</name>
    <dbReference type="NCBI Taxonomy" id="290338"/>
    <lineage>
        <taxon>Bacteria</taxon>
        <taxon>Pseudomonadati</taxon>
        <taxon>Pseudomonadota</taxon>
        <taxon>Gammaproteobacteria</taxon>
        <taxon>Enterobacterales</taxon>
        <taxon>Enterobacteriaceae</taxon>
        <taxon>Citrobacter</taxon>
    </lineage>
</organism>
<feature type="chain" id="PRO_1000051776" description="Small ribosomal subunit protein uS8">
    <location>
        <begin position="1"/>
        <end position="130"/>
    </location>
</feature>
<comment type="function">
    <text evidence="1">One of the primary rRNA binding proteins, it binds directly to 16S rRNA central domain where it helps coordinate assembly of the platform of the 30S subunit.</text>
</comment>
<comment type="subunit">
    <text evidence="1">Part of the 30S ribosomal subunit. Contacts proteins S5 and S12.</text>
</comment>
<comment type="similarity">
    <text evidence="1">Belongs to the universal ribosomal protein uS8 family.</text>
</comment>
<name>RS8_CITK8</name>
<accession>A8AQK2</accession>
<reference key="1">
    <citation type="submission" date="2007-08" db="EMBL/GenBank/DDBJ databases">
        <authorList>
            <consortium name="The Citrobacter koseri Genome Sequencing Project"/>
            <person name="McClelland M."/>
            <person name="Sanderson E.K."/>
            <person name="Porwollik S."/>
            <person name="Spieth J."/>
            <person name="Clifton W.S."/>
            <person name="Latreille P."/>
            <person name="Courtney L."/>
            <person name="Wang C."/>
            <person name="Pepin K."/>
            <person name="Bhonagiri V."/>
            <person name="Nash W."/>
            <person name="Johnson M."/>
            <person name="Thiruvilangam P."/>
            <person name="Wilson R."/>
        </authorList>
    </citation>
    <scope>NUCLEOTIDE SEQUENCE [LARGE SCALE GENOMIC DNA]</scope>
    <source>
        <strain>ATCC BAA-895 / CDC 4225-83 / SGSC4696</strain>
    </source>
</reference>
<dbReference type="EMBL" id="CP000822">
    <property type="protein sequence ID" value="ABV15765.1"/>
    <property type="molecule type" value="Genomic_DNA"/>
</dbReference>
<dbReference type="RefSeq" id="WP_000062611.1">
    <property type="nucleotide sequence ID" value="NC_009792.1"/>
</dbReference>
<dbReference type="SMR" id="A8AQK2"/>
<dbReference type="STRING" id="290338.CKO_04720"/>
<dbReference type="GeneID" id="93778681"/>
<dbReference type="KEGG" id="cko:CKO_04720"/>
<dbReference type="HOGENOM" id="CLU_098428_0_0_6"/>
<dbReference type="OrthoDB" id="9802617at2"/>
<dbReference type="Proteomes" id="UP000008148">
    <property type="component" value="Chromosome"/>
</dbReference>
<dbReference type="GO" id="GO:1990904">
    <property type="term" value="C:ribonucleoprotein complex"/>
    <property type="evidence" value="ECO:0007669"/>
    <property type="project" value="UniProtKB-KW"/>
</dbReference>
<dbReference type="GO" id="GO:0005840">
    <property type="term" value="C:ribosome"/>
    <property type="evidence" value="ECO:0007669"/>
    <property type="project" value="UniProtKB-KW"/>
</dbReference>
<dbReference type="GO" id="GO:0019843">
    <property type="term" value="F:rRNA binding"/>
    <property type="evidence" value="ECO:0007669"/>
    <property type="project" value="UniProtKB-UniRule"/>
</dbReference>
<dbReference type="GO" id="GO:0003735">
    <property type="term" value="F:structural constituent of ribosome"/>
    <property type="evidence" value="ECO:0007669"/>
    <property type="project" value="InterPro"/>
</dbReference>
<dbReference type="GO" id="GO:0006412">
    <property type="term" value="P:translation"/>
    <property type="evidence" value="ECO:0007669"/>
    <property type="project" value="UniProtKB-UniRule"/>
</dbReference>
<dbReference type="FunFam" id="3.30.1370.30:FF:000003">
    <property type="entry name" value="30S ribosomal protein S8"/>
    <property type="match status" value="1"/>
</dbReference>
<dbReference type="FunFam" id="3.30.1490.10:FF:000001">
    <property type="entry name" value="30S ribosomal protein S8"/>
    <property type="match status" value="1"/>
</dbReference>
<dbReference type="Gene3D" id="3.30.1370.30">
    <property type="match status" value="1"/>
</dbReference>
<dbReference type="Gene3D" id="3.30.1490.10">
    <property type="match status" value="1"/>
</dbReference>
<dbReference type="HAMAP" id="MF_01302_B">
    <property type="entry name" value="Ribosomal_uS8_B"/>
    <property type="match status" value="1"/>
</dbReference>
<dbReference type="InterPro" id="IPR000630">
    <property type="entry name" value="Ribosomal_uS8"/>
</dbReference>
<dbReference type="InterPro" id="IPR047863">
    <property type="entry name" value="Ribosomal_uS8_CS"/>
</dbReference>
<dbReference type="InterPro" id="IPR035987">
    <property type="entry name" value="Ribosomal_uS8_sf"/>
</dbReference>
<dbReference type="NCBIfam" id="NF001109">
    <property type="entry name" value="PRK00136.1"/>
    <property type="match status" value="1"/>
</dbReference>
<dbReference type="PANTHER" id="PTHR11758">
    <property type="entry name" value="40S RIBOSOMAL PROTEIN S15A"/>
    <property type="match status" value="1"/>
</dbReference>
<dbReference type="Pfam" id="PF00410">
    <property type="entry name" value="Ribosomal_S8"/>
    <property type="match status" value="1"/>
</dbReference>
<dbReference type="SUPFAM" id="SSF56047">
    <property type="entry name" value="Ribosomal protein S8"/>
    <property type="match status" value="1"/>
</dbReference>
<dbReference type="PROSITE" id="PS00053">
    <property type="entry name" value="RIBOSOMAL_S8"/>
    <property type="match status" value="1"/>
</dbReference>
<gene>
    <name evidence="1" type="primary">rpsH</name>
    <name type="ordered locus">CKO_04720</name>
</gene>
<proteinExistence type="inferred from homology"/>
<protein>
    <recommendedName>
        <fullName evidence="1">Small ribosomal subunit protein uS8</fullName>
    </recommendedName>
    <alternativeName>
        <fullName evidence="2">30S ribosomal protein S8</fullName>
    </alternativeName>
</protein>
<keyword id="KW-1185">Reference proteome</keyword>
<keyword id="KW-0687">Ribonucleoprotein</keyword>
<keyword id="KW-0689">Ribosomal protein</keyword>
<keyword id="KW-0694">RNA-binding</keyword>
<keyword id="KW-0699">rRNA-binding</keyword>